<keyword id="KW-0028">Amino-acid biosynthesis</keyword>
<keyword id="KW-0057">Aromatic amino acid biosynthesis</keyword>
<keyword id="KW-0456">Lyase</keyword>
<keyword id="KW-0663">Pyridoxal phosphate</keyword>
<keyword id="KW-0822">Tryptophan biosynthesis</keyword>
<feature type="chain" id="PRO_0000099021" description="Tryptophan synthase beta chain">
    <location>
        <begin position="1"/>
        <end position="396"/>
    </location>
</feature>
<feature type="modified residue" description="N6-(pyridoxal phosphate)lysine" evidence="1">
    <location>
        <position position="86"/>
    </location>
</feature>
<proteinExistence type="inferred from homology"/>
<organism>
    <name type="scientific">Vibrio vulnificus (strain CMCP6)</name>
    <dbReference type="NCBI Taxonomy" id="216895"/>
    <lineage>
        <taxon>Bacteria</taxon>
        <taxon>Pseudomonadati</taxon>
        <taxon>Pseudomonadota</taxon>
        <taxon>Gammaproteobacteria</taxon>
        <taxon>Vibrionales</taxon>
        <taxon>Vibrionaceae</taxon>
        <taxon>Vibrio</taxon>
    </lineage>
</organism>
<comment type="function">
    <text evidence="1">The beta subunit is responsible for the synthesis of L-tryptophan from indole and L-serine.</text>
</comment>
<comment type="catalytic activity">
    <reaction evidence="1">
        <text>(1S,2R)-1-C-(indol-3-yl)glycerol 3-phosphate + L-serine = D-glyceraldehyde 3-phosphate + L-tryptophan + H2O</text>
        <dbReference type="Rhea" id="RHEA:10532"/>
        <dbReference type="ChEBI" id="CHEBI:15377"/>
        <dbReference type="ChEBI" id="CHEBI:33384"/>
        <dbReference type="ChEBI" id="CHEBI:57912"/>
        <dbReference type="ChEBI" id="CHEBI:58866"/>
        <dbReference type="ChEBI" id="CHEBI:59776"/>
        <dbReference type="EC" id="4.2.1.20"/>
    </reaction>
</comment>
<comment type="cofactor">
    <cofactor evidence="1">
        <name>pyridoxal 5'-phosphate</name>
        <dbReference type="ChEBI" id="CHEBI:597326"/>
    </cofactor>
</comment>
<comment type="pathway">
    <text evidence="1">Amino-acid biosynthesis; L-tryptophan biosynthesis; L-tryptophan from chorismate: step 5/5.</text>
</comment>
<comment type="subunit">
    <text evidence="1">Tetramer of two alpha and two beta chains.</text>
</comment>
<comment type="similarity">
    <text evidence="1">Belongs to the TrpB family.</text>
</comment>
<accession>Q8D8B2</accession>
<evidence type="ECO:0000255" key="1">
    <source>
        <dbReference type="HAMAP-Rule" id="MF_00133"/>
    </source>
</evidence>
<protein>
    <recommendedName>
        <fullName evidence="1">Tryptophan synthase beta chain</fullName>
        <ecNumber evidence="1">4.2.1.20</ecNumber>
    </recommendedName>
</protein>
<name>TRPB_VIBVU</name>
<reference key="1">
    <citation type="submission" date="2002-12" db="EMBL/GenBank/DDBJ databases">
        <title>Complete genome sequence of Vibrio vulnificus CMCP6.</title>
        <authorList>
            <person name="Rhee J.H."/>
            <person name="Kim S.Y."/>
            <person name="Chung S.S."/>
            <person name="Kim J.J."/>
            <person name="Moon Y.H."/>
            <person name="Jeong H."/>
            <person name="Choy H.E."/>
        </authorList>
    </citation>
    <scope>NUCLEOTIDE SEQUENCE [LARGE SCALE GENOMIC DNA]</scope>
    <source>
        <strain>CMCP6</strain>
    </source>
</reference>
<gene>
    <name evidence="1" type="primary">trpB</name>
    <name type="ordered locus">VV1_3068</name>
</gene>
<dbReference type="EC" id="4.2.1.20" evidence="1"/>
<dbReference type="EMBL" id="AE016795">
    <property type="protein sequence ID" value="AAO11392.1"/>
    <property type="molecule type" value="Genomic_DNA"/>
</dbReference>
<dbReference type="RefSeq" id="WP_011080871.1">
    <property type="nucleotide sequence ID" value="NC_004459.3"/>
</dbReference>
<dbReference type="SMR" id="Q8D8B2"/>
<dbReference type="GeneID" id="93894277"/>
<dbReference type="KEGG" id="vvu:VV1_3068"/>
<dbReference type="HOGENOM" id="CLU_016734_3_1_6"/>
<dbReference type="UniPathway" id="UPA00035">
    <property type="reaction ID" value="UER00044"/>
</dbReference>
<dbReference type="Proteomes" id="UP000002275">
    <property type="component" value="Chromosome 1"/>
</dbReference>
<dbReference type="GO" id="GO:0005737">
    <property type="term" value="C:cytoplasm"/>
    <property type="evidence" value="ECO:0007669"/>
    <property type="project" value="TreeGrafter"/>
</dbReference>
<dbReference type="GO" id="GO:0004834">
    <property type="term" value="F:tryptophan synthase activity"/>
    <property type="evidence" value="ECO:0007669"/>
    <property type="project" value="UniProtKB-UniRule"/>
</dbReference>
<dbReference type="CDD" id="cd06446">
    <property type="entry name" value="Trp-synth_B"/>
    <property type="match status" value="1"/>
</dbReference>
<dbReference type="FunFam" id="3.40.50.1100:FF:000001">
    <property type="entry name" value="Tryptophan synthase beta chain"/>
    <property type="match status" value="1"/>
</dbReference>
<dbReference type="FunFam" id="3.40.50.1100:FF:000004">
    <property type="entry name" value="Tryptophan synthase beta chain"/>
    <property type="match status" value="1"/>
</dbReference>
<dbReference type="Gene3D" id="3.40.50.1100">
    <property type="match status" value="2"/>
</dbReference>
<dbReference type="HAMAP" id="MF_00133">
    <property type="entry name" value="Trp_synth_beta"/>
    <property type="match status" value="1"/>
</dbReference>
<dbReference type="InterPro" id="IPR006653">
    <property type="entry name" value="Trp_synth_b_CS"/>
</dbReference>
<dbReference type="InterPro" id="IPR006654">
    <property type="entry name" value="Trp_synth_beta"/>
</dbReference>
<dbReference type="InterPro" id="IPR023026">
    <property type="entry name" value="Trp_synth_beta/beta-like"/>
</dbReference>
<dbReference type="InterPro" id="IPR001926">
    <property type="entry name" value="TrpB-like_PALP"/>
</dbReference>
<dbReference type="InterPro" id="IPR036052">
    <property type="entry name" value="TrpB-like_PALP_sf"/>
</dbReference>
<dbReference type="NCBIfam" id="TIGR00263">
    <property type="entry name" value="trpB"/>
    <property type="match status" value="1"/>
</dbReference>
<dbReference type="PANTHER" id="PTHR48077:SF3">
    <property type="entry name" value="TRYPTOPHAN SYNTHASE"/>
    <property type="match status" value="1"/>
</dbReference>
<dbReference type="PANTHER" id="PTHR48077">
    <property type="entry name" value="TRYPTOPHAN SYNTHASE-RELATED"/>
    <property type="match status" value="1"/>
</dbReference>
<dbReference type="Pfam" id="PF00291">
    <property type="entry name" value="PALP"/>
    <property type="match status" value="1"/>
</dbReference>
<dbReference type="PIRSF" id="PIRSF001413">
    <property type="entry name" value="Trp_syn_beta"/>
    <property type="match status" value="1"/>
</dbReference>
<dbReference type="SUPFAM" id="SSF53686">
    <property type="entry name" value="Tryptophan synthase beta subunit-like PLP-dependent enzymes"/>
    <property type="match status" value="1"/>
</dbReference>
<dbReference type="PROSITE" id="PS00168">
    <property type="entry name" value="TRP_SYNTHASE_BETA"/>
    <property type="match status" value="1"/>
</dbReference>
<sequence length="396" mass="42850">MTKLNAYFGEYGGQYVPQILVPALEQLEQAFIDAQEDPDFRSEFMGLLQEYAGRPTALTLTRNLTKGTKTKLYLKREDLLHGGAHKTNQVLGQALLAKRMGKNEIIAETGAGQHGVATALACALLGLKCRVYMGAKDVERQSPNVFRMKLMGATVIPVHSGSATLKDACNEALRDWSGSYETAHYLLGTAAGPHPFPTIVREFQRMIGEETKNQILAREGRLPDAVIACVGGGSNAIGMFADFIEEETVRLIGVEPAGKGIDTDQHGAPLKHGKTGIFFGMKAPLMQDENGQVEESYSVSAGLDFPSVGPQHAHLNAIGRAEYDSITDDEALDAFQELARSEGIIPALESSHALAHALKMARNNPEKEQLLVVNLSGRGDKDIFTVHAILEEKGAI</sequence>